<protein>
    <recommendedName>
        <fullName>Protein kinase gsk3</fullName>
        <ecNumber>2.7.11.1</ecNumber>
    </recommendedName>
    <alternativeName>
        <fullName>Protein kinase skp1</fullName>
    </alternativeName>
</protein>
<reference key="1">
    <citation type="journal article" date="1996" name="Mol. Cell. Biol.">
        <title>Schizosaccharomyces pombe skp1+ encodes a protein kinase related to mammalian glycogen synthase kinase 3 and complements a cdc14 cytokinesis mutant.</title>
        <authorList>
            <person name="Plyte S.E."/>
            <person name="Feoktistova A."/>
            <person name="Burke J.D."/>
            <person name="Woodgett J.R."/>
            <person name="Gould K.L."/>
        </authorList>
    </citation>
    <scope>NUCLEOTIDE SEQUENCE [GENOMIC DNA]</scope>
    <scope>FUNCTION</scope>
    <scope>INTERACTION WITH CDC14</scope>
    <scope>MUTAGENESIS OF LYS-61; TYR-192 AND SER-335</scope>
    <scope>PHOSPHORYLATION AT TYR-192 AND SER-335</scope>
</reference>
<reference key="2">
    <citation type="journal article" date="2002" name="Nature">
        <title>The genome sequence of Schizosaccharomyces pombe.</title>
        <authorList>
            <person name="Wood V."/>
            <person name="Gwilliam R."/>
            <person name="Rajandream M.A."/>
            <person name="Lyne M.H."/>
            <person name="Lyne R."/>
            <person name="Stewart A."/>
            <person name="Sgouros J.G."/>
            <person name="Peat N."/>
            <person name="Hayles J."/>
            <person name="Baker S.G."/>
            <person name="Basham D."/>
            <person name="Bowman S."/>
            <person name="Brooks K."/>
            <person name="Brown D."/>
            <person name="Brown S."/>
            <person name="Chillingworth T."/>
            <person name="Churcher C.M."/>
            <person name="Collins M."/>
            <person name="Connor R."/>
            <person name="Cronin A."/>
            <person name="Davis P."/>
            <person name="Feltwell T."/>
            <person name="Fraser A."/>
            <person name="Gentles S."/>
            <person name="Goble A."/>
            <person name="Hamlin N."/>
            <person name="Harris D.E."/>
            <person name="Hidalgo J."/>
            <person name="Hodgson G."/>
            <person name="Holroyd S."/>
            <person name="Hornsby T."/>
            <person name="Howarth S."/>
            <person name="Huckle E.J."/>
            <person name="Hunt S."/>
            <person name="Jagels K."/>
            <person name="James K.D."/>
            <person name="Jones L."/>
            <person name="Jones M."/>
            <person name="Leather S."/>
            <person name="McDonald S."/>
            <person name="McLean J."/>
            <person name="Mooney P."/>
            <person name="Moule S."/>
            <person name="Mungall K.L."/>
            <person name="Murphy L.D."/>
            <person name="Niblett D."/>
            <person name="Odell C."/>
            <person name="Oliver K."/>
            <person name="O'Neil S."/>
            <person name="Pearson D."/>
            <person name="Quail M.A."/>
            <person name="Rabbinowitsch E."/>
            <person name="Rutherford K.M."/>
            <person name="Rutter S."/>
            <person name="Saunders D."/>
            <person name="Seeger K."/>
            <person name="Sharp S."/>
            <person name="Skelton J."/>
            <person name="Simmonds M.N."/>
            <person name="Squares R."/>
            <person name="Squares S."/>
            <person name="Stevens K."/>
            <person name="Taylor K."/>
            <person name="Taylor R.G."/>
            <person name="Tivey A."/>
            <person name="Walsh S.V."/>
            <person name="Warren T."/>
            <person name="Whitehead S."/>
            <person name="Woodward J.R."/>
            <person name="Volckaert G."/>
            <person name="Aert R."/>
            <person name="Robben J."/>
            <person name="Grymonprez B."/>
            <person name="Weltjens I."/>
            <person name="Vanstreels E."/>
            <person name="Rieger M."/>
            <person name="Schaefer M."/>
            <person name="Mueller-Auer S."/>
            <person name="Gabel C."/>
            <person name="Fuchs M."/>
            <person name="Duesterhoeft A."/>
            <person name="Fritzc C."/>
            <person name="Holzer E."/>
            <person name="Moestl D."/>
            <person name="Hilbert H."/>
            <person name="Borzym K."/>
            <person name="Langer I."/>
            <person name="Beck A."/>
            <person name="Lehrach H."/>
            <person name="Reinhardt R."/>
            <person name="Pohl T.M."/>
            <person name="Eger P."/>
            <person name="Zimmermann W."/>
            <person name="Wedler H."/>
            <person name="Wambutt R."/>
            <person name="Purnelle B."/>
            <person name="Goffeau A."/>
            <person name="Cadieu E."/>
            <person name="Dreano S."/>
            <person name="Gloux S."/>
            <person name="Lelaure V."/>
            <person name="Mottier S."/>
            <person name="Galibert F."/>
            <person name="Aves S.J."/>
            <person name="Xiang Z."/>
            <person name="Hunt C."/>
            <person name="Moore K."/>
            <person name="Hurst S.M."/>
            <person name="Lucas M."/>
            <person name="Rochet M."/>
            <person name="Gaillardin C."/>
            <person name="Tallada V.A."/>
            <person name="Garzon A."/>
            <person name="Thode G."/>
            <person name="Daga R.R."/>
            <person name="Cruzado L."/>
            <person name="Jimenez J."/>
            <person name="Sanchez M."/>
            <person name="del Rey F."/>
            <person name="Benito J."/>
            <person name="Dominguez A."/>
            <person name="Revuelta J.L."/>
            <person name="Moreno S."/>
            <person name="Armstrong J."/>
            <person name="Forsburg S.L."/>
            <person name="Cerutti L."/>
            <person name="Lowe T."/>
            <person name="McCombie W.R."/>
            <person name="Paulsen I."/>
            <person name="Potashkin J."/>
            <person name="Shpakovski G.V."/>
            <person name="Ussery D."/>
            <person name="Barrell B.G."/>
            <person name="Nurse P."/>
        </authorList>
    </citation>
    <scope>NUCLEOTIDE SEQUENCE [LARGE SCALE GENOMIC DNA]</scope>
    <source>
        <strain>972 / ATCC 24843</strain>
    </source>
</reference>
<reference key="3">
    <citation type="journal article" date="2003" name="EMBO J.">
        <title>The role of Ppe1/PP6 phosphatase for equal chromosome segregation in fission yeast kinetochore.</title>
        <authorList>
            <person name="Goshima G."/>
            <person name="Iwasaki O."/>
            <person name="Obuse C."/>
            <person name="Yanagida M."/>
        </authorList>
    </citation>
    <scope>FUNCTION</scope>
</reference>
<reference key="4">
    <citation type="journal article" date="2006" name="Nat. Biotechnol.">
        <title>ORFeome cloning and global analysis of protein localization in the fission yeast Schizosaccharomyces pombe.</title>
        <authorList>
            <person name="Matsuyama A."/>
            <person name="Arai R."/>
            <person name="Yashiroda Y."/>
            <person name="Shirai A."/>
            <person name="Kamata A."/>
            <person name="Sekido S."/>
            <person name="Kobayashi Y."/>
            <person name="Hashimoto A."/>
            <person name="Hamamoto M."/>
            <person name="Hiraoka Y."/>
            <person name="Horinouchi S."/>
            <person name="Yoshida M."/>
        </authorList>
    </citation>
    <scope>SUBCELLULAR LOCATION [LARGE SCALE ANALYSIS]</scope>
</reference>
<reference key="5">
    <citation type="journal article" date="2008" name="J. Proteome Res.">
        <title>Phosphoproteome analysis of fission yeast.</title>
        <authorList>
            <person name="Wilson-Grady J.T."/>
            <person name="Villen J."/>
            <person name="Gygi S.P."/>
        </authorList>
    </citation>
    <scope>PHOSPHORYLATION [LARGE SCALE ANALYSIS] AT SER-191 AND TYR-192</scope>
    <scope>IDENTIFICATION BY MASS SPECTROMETRY</scope>
</reference>
<keyword id="KW-0067">ATP-binding</keyword>
<keyword id="KW-0131">Cell cycle</keyword>
<keyword id="KW-0132">Cell division</keyword>
<keyword id="KW-0963">Cytoplasm</keyword>
<keyword id="KW-0418">Kinase</keyword>
<keyword id="KW-0498">Mitosis</keyword>
<keyword id="KW-0547">Nucleotide-binding</keyword>
<keyword id="KW-0539">Nucleus</keyword>
<keyword id="KW-0597">Phosphoprotein</keyword>
<keyword id="KW-1185">Reference proteome</keyword>
<keyword id="KW-0723">Serine/threonine-protein kinase</keyword>
<keyword id="KW-0808">Transferase</keyword>
<accession>Q10452</accession>
<accession>O94456</accession>
<gene>
    <name type="primary">gsk3</name>
    <name type="synonym">skp1</name>
    <name type="ORF">SPAC1687.15</name>
</gene>
<proteinExistence type="evidence at protein level"/>
<organism>
    <name type="scientific">Schizosaccharomyces pombe (strain 972 / ATCC 24843)</name>
    <name type="common">Fission yeast</name>
    <dbReference type="NCBI Taxonomy" id="284812"/>
    <lineage>
        <taxon>Eukaryota</taxon>
        <taxon>Fungi</taxon>
        <taxon>Dikarya</taxon>
        <taxon>Ascomycota</taxon>
        <taxon>Taphrinomycotina</taxon>
        <taxon>Schizosaccharomycetes</taxon>
        <taxon>Schizosaccharomycetales</taxon>
        <taxon>Schizosaccharomycetaceae</taxon>
        <taxon>Schizosaccharomyces</taxon>
    </lineage>
</organism>
<dbReference type="EC" id="2.7.11.1"/>
<dbReference type="EMBL" id="L29449">
    <property type="protein sequence ID" value="AAB51081.1"/>
    <property type="molecule type" value="Genomic_DNA"/>
</dbReference>
<dbReference type="EMBL" id="CU329670">
    <property type="protein sequence ID" value="CAA22609.1"/>
    <property type="molecule type" value="Genomic_DNA"/>
</dbReference>
<dbReference type="PIR" id="T37758">
    <property type="entry name" value="T37758"/>
</dbReference>
<dbReference type="PIR" id="T45138">
    <property type="entry name" value="T45138"/>
</dbReference>
<dbReference type="RefSeq" id="NP_593134.1">
    <property type="nucleotide sequence ID" value="NM_001018530.2"/>
</dbReference>
<dbReference type="SMR" id="Q10452"/>
<dbReference type="BioGRID" id="279106">
    <property type="interactions" value="386"/>
</dbReference>
<dbReference type="FunCoup" id="Q10452">
    <property type="interactions" value="531"/>
</dbReference>
<dbReference type="STRING" id="284812.Q10452"/>
<dbReference type="iPTMnet" id="Q10452"/>
<dbReference type="PaxDb" id="4896-SPAC1687.15.1"/>
<dbReference type="EnsemblFungi" id="SPAC1687.15.1">
    <property type="protein sequence ID" value="SPAC1687.15.1:pep"/>
    <property type="gene ID" value="SPAC1687.15"/>
</dbReference>
<dbReference type="GeneID" id="2542652"/>
<dbReference type="KEGG" id="spo:2542652"/>
<dbReference type="PomBase" id="SPAC1687.15">
    <property type="gene designation" value="gsk3"/>
</dbReference>
<dbReference type="VEuPathDB" id="FungiDB:SPAC1687.15"/>
<dbReference type="eggNOG" id="KOG0658">
    <property type="taxonomic scope" value="Eukaryota"/>
</dbReference>
<dbReference type="HOGENOM" id="CLU_000288_181_20_1"/>
<dbReference type="InParanoid" id="Q10452"/>
<dbReference type="OMA" id="MKTTMPM"/>
<dbReference type="PhylomeDB" id="Q10452"/>
<dbReference type="BRENDA" id="2.7.11.26">
    <property type="organism ID" value="5613"/>
</dbReference>
<dbReference type="Reactome" id="R-SPO-3371453">
    <property type="pathway name" value="Regulation of HSF1-mediated heat shock response"/>
</dbReference>
<dbReference type="PRO" id="PR:Q10452"/>
<dbReference type="Proteomes" id="UP000002485">
    <property type="component" value="Chromosome I"/>
</dbReference>
<dbReference type="GO" id="GO:0005737">
    <property type="term" value="C:cytoplasm"/>
    <property type="evidence" value="ECO:0000318"/>
    <property type="project" value="GO_Central"/>
</dbReference>
<dbReference type="GO" id="GO:0005829">
    <property type="term" value="C:cytosol"/>
    <property type="evidence" value="ECO:0007005"/>
    <property type="project" value="PomBase"/>
</dbReference>
<dbReference type="GO" id="GO:0005634">
    <property type="term" value="C:nucleus"/>
    <property type="evidence" value="ECO:0007005"/>
    <property type="project" value="PomBase"/>
</dbReference>
<dbReference type="GO" id="GO:0005524">
    <property type="term" value="F:ATP binding"/>
    <property type="evidence" value="ECO:0007669"/>
    <property type="project" value="UniProtKB-KW"/>
</dbReference>
<dbReference type="GO" id="GO:0004672">
    <property type="term" value="F:protein kinase activity"/>
    <property type="evidence" value="ECO:0000314"/>
    <property type="project" value="UniProtKB"/>
</dbReference>
<dbReference type="GO" id="GO:0106310">
    <property type="term" value="F:protein serine kinase activity"/>
    <property type="evidence" value="ECO:0007669"/>
    <property type="project" value="RHEA"/>
</dbReference>
<dbReference type="GO" id="GO:0004674">
    <property type="term" value="F:protein serine/threonine kinase activity"/>
    <property type="evidence" value="ECO:0000314"/>
    <property type="project" value="PomBase"/>
</dbReference>
<dbReference type="GO" id="GO:0004712">
    <property type="term" value="F:protein serine/threonine/tyrosine kinase activity"/>
    <property type="evidence" value="ECO:0000314"/>
    <property type="project" value="UniProtKB"/>
</dbReference>
<dbReference type="GO" id="GO:0004713">
    <property type="term" value="F:protein tyrosine kinase activity"/>
    <property type="evidence" value="ECO:0000314"/>
    <property type="project" value="PomBase"/>
</dbReference>
<dbReference type="GO" id="GO:0030154">
    <property type="term" value="P:cell differentiation"/>
    <property type="evidence" value="ECO:0000318"/>
    <property type="project" value="GO_Central"/>
</dbReference>
<dbReference type="GO" id="GO:0051301">
    <property type="term" value="P:cell division"/>
    <property type="evidence" value="ECO:0007669"/>
    <property type="project" value="UniProtKB-KW"/>
</dbReference>
<dbReference type="GO" id="GO:0051984">
    <property type="term" value="P:positive regulation of chromosome segregation"/>
    <property type="evidence" value="ECO:0000315"/>
    <property type="project" value="UniProtKB"/>
</dbReference>
<dbReference type="GO" id="GO:1905561">
    <property type="term" value="P:positive regulation of kinetochore assembly"/>
    <property type="evidence" value="ECO:0000315"/>
    <property type="project" value="PomBase"/>
</dbReference>
<dbReference type="GO" id="GO:0006468">
    <property type="term" value="P:protein phosphorylation"/>
    <property type="evidence" value="ECO:0000316"/>
    <property type="project" value="UniProtKB"/>
</dbReference>
<dbReference type="GO" id="GO:0007165">
    <property type="term" value="P:signal transduction"/>
    <property type="evidence" value="ECO:0000318"/>
    <property type="project" value="GO_Central"/>
</dbReference>
<dbReference type="GO" id="GO:0032933">
    <property type="term" value="P:SREBP signaling pathway"/>
    <property type="evidence" value="ECO:0000315"/>
    <property type="project" value="PomBase"/>
</dbReference>
<dbReference type="CDD" id="cd14137">
    <property type="entry name" value="STKc_GSK3"/>
    <property type="match status" value="1"/>
</dbReference>
<dbReference type="FunFam" id="1.10.510.10:FF:000055">
    <property type="entry name" value="Glycogen synthase kinase-3 beta"/>
    <property type="match status" value="1"/>
</dbReference>
<dbReference type="FunFam" id="3.30.200.20:FF:000009">
    <property type="entry name" value="Glycogen synthase kinase-3 beta"/>
    <property type="match status" value="1"/>
</dbReference>
<dbReference type="Gene3D" id="3.30.200.20">
    <property type="entry name" value="Phosphorylase Kinase, domain 1"/>
    <property type="match status" value="1"/>
</dbReference>
<dbReference type="Gene3D" id="1.10.510.10">
    <property type="entry name" value="Transferase(Phosphotransferase) domain 1"/>
    <property type="match status" value="1"/>
</dbReference>
<dbReference type="InterPro" id="IPR050591">
    <property type="entry name" value="GSK-3"/>
</dbReference>
<dbReference type="InterPro" id="IPR011009">
    <property type="entry name" value="Kinase-like_dom_sf"/>
</dbReference>
<dbReference type="InterPro" id="IPR000719">
    <property type="entry name" value="Prot_kinase_dom"/>
</dbReference>
<dbReference type="InterPro" id="IPR017441">
    <property type="entry name" value="Protein_kinase_ATP_BS"/>
</dbReference>
<dbReference type="InterPro" id="IPR008271">
    <property type="entry name" value="Ser/Thr_kinase_AS"/>
</dbReference>
<dbReference type="InterPro" id="IPR039192">
    <property type="entry name" value="STKc_GSK3"/>
</dbReference>
<dbReference type="PANTHER" id="PTHR24057">
    <property type="entry name" value="GLYCOGEN SYNTHASE KINASE-3 ALPHA"/>
    <property type="match status" value="1"/>
</dbReference>
<dbReference type="PANTHER" id="PTHR24057:SF0">
    <property type="entry name" value="PROTEIN KINASE SHAGGY-RELATED"/>
    <property type="match status" value="1"/>
</dbReference>
<dbReference type="Pfam" id="PF00069">
    <property type="entry name" value="Pkinase"/>
    <property type="match status" value="1"/>
</dbReference>
<dbReference type="SMART" id="SM00220">
    <property type="entry name" value="S_TKc"/>
    <property type="match status" value="1"/>
</dbReference>
<dbReference type="SUPFAM" id="SSF56112">
    <property type="entry name" value="Protein kinase-like (PK-like)"/>
    <property type="match status" value="1"/>
</dbReference>
<dbReference type="PROSITE" id="PS00107">
    <property type="entry name" value="PROTEIN_KINASE_ATP"/>
    <property type="match status" value="1"/>
</dbReference>
<dbReference type="PROSITE" id="PS50011">
    <property type="entry name" value="PROTEIN_KINASE_DOM"/>
    <property type="match status" value="1"/>
</dbReference>
<dbReference type="PROSITE" id="PS00108">
    <property type="entry name" value="PROTEIN_KINASE_ST"/>
    <property type="match status" value="1"/>
</dbReference>
<feature type="chain" id="PRO_0000085985" description="Protein kinase gsk3">
    <location>
        <begin position="1"/>
        <end position="387"/>
    </location>
</feature>
<feature type="domain" description="Protein kinase" evidence="1">
    <location>
        <begin position="32"/>
        <end position="316"/>
    </location>
</feature>
<feature type="active site" description="Proton acceptor" evidence="1 2">
    <location>
        <position position="157"/>
    </location>
</feature>
<feature type="binding site" evidence="1">
    <location>
        <begin position="38"/>
        <end position="46"/>
    </location>
    <ligand>
        <name>ATP</name>
        <dbReference type="ChEBI" id="CHEBI:30616"/>
    </ligand>
</feature>
<feature type="binding site" evidence="1">
    <location>
        <position position="61"/>
    </location>
    <ligand>
        <name>ATP</name>
        <dbReference type="ChEBI" id="CHEBI:30616"/>
    </ligand>
</feature>
<feature type="modified residue" description="Phosphoserine" evidence="5">
    <location>
        <position position="191"/>
    </location>
</feature>
<feature type="modified residue" description="Phosphotyrosine; by autocatalysis" evidence="5 6">
    <location>
        <position position="192"/>
    </location>
</feature>
<feature type="modified residue" description="Phosphoserine" evidence="6">
    <location>
        <position position="335"/>
    </location>
</feature>
<feature type="mutagenesis site" description="Abolishes protein kinase activity." evidence="6">
    <original>K</original>
    <variation>A</variation>
    <location>
        <position position="61"/>
    </location>
</feature>
<feature type="mutagenesis site" description="Delays formation of F-actin contractile ring." evidence="6">
    <original>Y</original>
    <variation>E</variation>
    <location>
        <position position="192"/>
    </location>
</feature>
<feature type="mutagenesis site" description="Loss of tyrosine phosphorylation." evidence="6">
    <original>Y</original>
    <variation>F</variation>
    <location>
        <position position="192"/>
    </location>
</feature>
<feature type="mutagenesis site" description="Delays cytokinesis. Chromatin condenses." evidence="6">
    <original>S</original>
    <variation>A</variation>
    <location>
        <position position="335"/>
    </location>
</feature>
<feature type="sequence conflict" description="In Ref. 1; AAB51081." evidence="7" ref="1">
    <original>ELSIRPDLNQKLIPSHARDALPVKLDDFVPIPIHRARID</original>
    <variation>GTIHSS</variation>
    <location>
        <begin position="349"/>
        <end position="387"/>
    </location>
</feature>
<comment type="function">
    <text evidence="3 6">Interacts with cdc14 which is thought to play a role in the initiation and completion of mitosis. Involved in the positive regulation of mis12.</text>
</comment>
<comment type="catalytic activity">
    <reaction>
        <text>L-seryl-[protein] + ATP = O-phospho-L-seryl-[protein] + ADP + H(+)</text>
        <dbReference type="Rhea" id="RHEA:17989"/>
        <dbReference type="Rhea" id="RHEA-COMP:9863"/>
        <dbReference type="Rhea" id="RHEA-COMP:11604"/>
        <dbReference type="ChEBI" id="CHEBI:15378"/>
        <dbReference type="ChEBI" id="CHEBI:29999"/>
        <dbReference type="ChEBI" id="CHEBI:30616"/>
        <dbReference type="ChEBI" id="CHEBI:83421"/>
        <dbReference type="ChEBI" id="CHEBI:456216"/>
        <dbReference type="EC" id="2.7.11.1"/>
    </reaction>
</comment>
<comment type="catalytic activity">
    <reaction>
        <text>L-threonyl-[protein] + ATP = O-phospho-L-threonyl-[protein] + ADP + H(+)</text>
        <dbReference type="Rhea" id="RHEA:46608"/>
        <dbReference type="Rhea" id="RHEA-COMP:11060"/>
        <dbReference type="Rhea" id="RHEA-COMP:11605"/>
        <dbReference type="ChEBI" id="CHEBI:15378"/>
        <dbReference type="ChEBI" id="CHEBI:30013"/>
        <dbReference type="ChEBI" id="CHEBI:30616"/>
        <dbReference type="ChEBI" id="CHEBI:61977"/>
        <dbReference type="ChEBI" id="CHEBI:456216"/>
        <dbReference type="EC" id="2.7.11.1"/>
    </reaction>
</comment>
<comment type="subcellular location">
    <subcellularLocation>
        <location evidence="4">Cytoplasm</location>
    </subcellularLocation>
    <subcellularLocation>
        <location evidence="4">Nucleus</location>
    </subcellularLocation>
</comment>
<comment type="PTM">
    <text evidence="5 6">Autophosphorylated on tyrosine residues.</text>
</comment>
<comment type="similarity">
    <text evidence="7">Belongs to the protein kinase superfamily. CMGC Ser/Thr protein kinase family. GSK-3 subfamily.</text>
</comment>
<name>GSK3_SCHPO</name>
<sequence length="387" mass="44165">MNHGTKIPVDPFRIIKETARDGSTGEVKQLSYTSSKVVGSGSFGVVMQVHLIESDSKAAIKRVLQDKRFKNRELQIMRIMKHPNIVDLIAYYYTTGDNSDEVYLNLVLEFMPETIYRASRLYTRQKLSMPMLEVKLYIYQLLRSLAYIHASGICHRDIKPQNLLLDPENGILKLCDFGSAKILVAGEPNVSYICSRYYRAPELIFGATDYTHAIDIWSTGCVMAELMLGHPLFPGESGIDQLVEIIKILGTPSREQIKTMNPNYMEHRFPQIRPQPLSRVFSRSVPLDALDLLSKMLQYTPTDRLTAAEAMCHPFFDELRDPNTKLHNSRNPDASPRHLPELFNFSPFELSIRPDLNQKLIPSHARDALPVKLDDFVPIPIHRARID</sequence>
<evidence type="ECO:0000255" key="1">
    <source>
        <dbReference type="PROSITE-ProRule" id="PRU00159"/>
    </source>
</evidence>
<evidence type="ECO:0000255" key="2">
    <source>
        <dbReference type="PROSITE-ProRule" id="PRU10027"/>
    </source>
</evidence>
<evidence type="ECO:0000269" key="3">
    <source>
    </source>
</evidence>
<evidence type="ECO:0000269" key="4">
    <source>
    </source>
</evidence>
<evidence type="ECO:0000269" key="5">
    <source>
    </source>
</evidence>
<evidence type="ECO:0000269" key="6">
    <source>
    </source>
</evidence>
<evidence type="ECO:0000305" key="7"/>